<feature type="chain" id="PRO_1000114118" description="Aminomethyltransferase">
    <location>
        <begin position="1"/>
        <end position="364"/>
    </location>
</feature>
<keyword id="KW-0032">Aminotransferase</keyword>
<keyword id="KW-1185">Reference proteome</keyword>
<keyword id="KW-0808">Transferase</keyword>
<proteinExistence type="inferred from homology"/>
<sequence length="364" mass="40113">MAQQTPLYEQHTLCGARMVDFHGWMMPLHYGSQIDEHHAVRTDAGMFDVSHMTIVDLRGSRTREFLRYLLANDVAKLTKSGKALYSGMLNASGGVIDDLIVYYFTEDLFRLVVNSATREKDLSWITQHAEPFGIEITVRDDLSMIAVQGPNAQAKAATLFNDAQRQAVEGMKPFFGVQAGDLFIATTGYTGEAGYEIALPNEKAADFWRALVEAGVKPCGLGARDTLRLEAGMNLYGQEMDETISPLAANMGWTIAWEPADRDFIGREALEVQREHGTEKLVGLVMTEKGVLRNELPVRFTDAQGNQHEGIITSGTFSPTLGYSIALARVPEGIGETAIVQIRNREMPVKVTKPVFVRNGKAVA</sequence>
<comment type="function">
    <text evidence="1">The glycine cleavage system catalyzes the degradation of glycine.</text>
</comment>
<comment type="catalytic activity">
    <reaction evidence="1">
        <text>N(6)-[(R)-S(8)-aminomethyldihydrolipoyl]-L-lysyl-[protein] + (6S)-5,6,7,8-tetrahydrofolate = N(6)-[(R)-dihydrolipoyl]-L-lysyl-[protein] + (6R)-5,10-methylene-5,6,7,8-tetrahydrofolate + NH4(+)</text>
        <dbReference type="Rhea" id="RHEA:16945"/>
        <dbReference type="Rhea" id="RHEA-COMP:10475"/>
        <dbReference type="Rhea" id="RHEA-COMP:10492"/>
        <dbReference type="ChEBI" id="CHEBI:15636"/>
        <dbReference type="ChEBI" id="CHEBI:28938"/>
        <dbReference type="ChEBI" id="CHEBI:57453"/>
        <dbReference type="ChEBI" id="CHEBI:83100"/>
        <dbReference type="ChEBI" id="CHEBI:83143"/>
        <dbReference type="EC" id="2.1.2.10"/>
    </reaction>
</comment>
<comment type="subunit">
    <text evidence="1">The glycine cleavage system is composed of four proteins: P, T, L and H.</text>
</comment>
<comment type="similarity">
    <text evidence="1">Belongs to the GcvT family.</text>
</comment>
<gene>
    <name evidence="1" type="primary">gcvT</name>
    <name type="ordered locus">SbBS512_E3326</name>
</gene>
<protein>
    <recommendedName>
        <fullName evidence="1">Aminomethyltransferase</fullName>
        <ecNumber evidence="1">2.1.2.10</ecNumber>
    </recommendedName>
    <alternativeName>
        <fullName evidence="1">Glycine cleavage system T protein</fullName>
    </alternativeName>
</protein>
<accession>B2U0S2</accession>
<name>GCST_SHIB3</name>
<reference key="1">
    <citation type="submission" date="2008-05" db="EMBL/GenBank/DDBJ databases">
        <title>Complete sequence of Shigella boydii serotype 18 strain BS512.</title>
        <authorList>
            <person name="Rasko D.A."/>
            <person name="Rosovitz M."/>
            <person name="Maurelli A.T."/>
            <person name="Myers G."/>
            <person name="Seshadri R."/>
            <person name="Cer R."/>
            <person name="Jiang L."/>
            <person name="Ravel J."/>
            <person name="Sebastian Y."/>
        </authorList>
    </citation>
    <scope>NUCLEOTIDE SEQUENCE [LARGE SCALE GENOMIC DNA]</scope>
    <source>
        <strain>CDC 3083-94 / BS512</strain>
    </source>
</reference>
<dbReference type="EC" id="2.1.2.10" evidence="1"/>
<dbReference type="EMBL" id="CP001063">
    <property type="protein sequence ID" value="ACD08079.1"/>
    <property type="molecule type" value="Genomic_DNA"/>
</dbReference>
<dbReference type="RefSeq" id="WP_012421406.1">
    <property type="nucleotide sequence ID" value="NC_010658.1"/>
</dbReference>
<dbReference type="SMR" id="B2U0S2"/>
<dbReference type="STRING" id="344609.SbBS512_E3326"/>
<dbReference type="KEGG" id="sbc:SbBS512_E3326"/>
<dbReference type="HOGENOM" id="CLU_007884_10_2_6"/>
<dbReference type="Proteomes" id="UP000001030">
    <property type="component" value="Chromosome"/>
</dbReference>
<dbReference type="GO" id="GO:0005829">
    <property type="term" value="C:cytosol"/>
    <property type="evidence" value="ECO:0007669"/>
    <property type="project" value="TreeGrafter"/>
</dbReference>
<dbReference type="GO" id="GO:0005960">
    <property type="term" value="C:glycine cleavage complex"/>
    <property type="evidence" value="ECO:0007669"/>
    <property type="project" value="InterPro"/>
</dbReference>
<dbReference type="GO" id="GO:0004047">
    <property type="term" value="F:aminomethyltransferase activity"/>
    <property type="evidence" value="ECO:0007669"/>
    <property type="project" value="UniProtKB-UniRule"/>
</dbReference>
<dbReference type="GO" id="GO:0008483">
    <property type="term" value="F:transaminase activity"/>
    <property type="evidence" value="ECO:0007669"/>
    <property type="project" value="UniProtKB-KW"/>
</dbReference>
<dbReference type="GO" id="GO:0019464">
    <property type="term" value="P:glycine decarboxylation via glycine cleavage system"/>
    <property type="evidence" value="ECO:0007669"/>
    <property type="project" value="UniProtKB-UniRule"/>
</dbReference>
<dbReference type="FunFam" id="2.40.30.110:FF:000001">
    <property type="entry name" value="Aminomethyltransferase"/>
    <property type="match status" value="1"/>
</dbReference>
<dbReference type="FunFam" id="3.30.70.1400:FF:000001">
    <property type="entry name" value="Aminomethyltransferase"/>
    <property type="match status" value="1"/>
</dbReference>
<dbReference type="FunFam" id="4.10.1250.10:FF:000001">
    <property type="entry name" value="Aminomethyltransferase"/>
    <property type="match status" value="1"/>
</dbReference>
<dbReference type="Gene3D" id="2.40.30.110">
    <property type="entry name" value="Aminomethyltransferase beta-barrel domains"/>
    <property type="match status" value="1"/>
</dbReference>
<dbReference type="Gene3D" id="3.30.70.1400">
    <property type="entry name" value="Aminomethyltransferase beta-barrel domains"/>
    <property type="match status" value="1"/>
</dbReference>
<dbReference type="Gene3D" id="4.10.1250.10">
    <property type="entry name" value="Aminomethyltransferase fragment"/>
    <property type="match status" value="1"/>
</dbReference>
<dbReference type="Gene3D" id="3.30.1360.120">
    <property type="entry name" value="Probable tRNA modification gtpase trme, domain 1"/>
    <property type="match status" value="1"/>
</dbReference>
<dbReference type="HAMAP" id="MF_00259">
    <property type="entry name" value="GcvT"/>
    <property type="match status" value="1"/>
</dbReference>
<dbReference type="InterPro" id="IPR006223">
    <property type="entry name" value="GCS_T"/>
</dbReference>
<dbReference type="InterPro" id="IPR022903">
    <property type="entry name" value="GCS_T_bac"/>
</dbReference>
<dbReference type="InterPro" id="IPR013977">
    <property type="entry name" value="GCST_C"/>
</dbReference>
<dbReference type="InterPro" id="IPR006222">
    <property type="entry name" value="GCV_T_N"/>
</dbReference>
<dbReference type="InterPro" id="IPR028896">
    <property type="entry name" value="GcvT/YgfZ/DmdA"/>
</dbReference>
<dbReference type="InterPro" id="IPR029043">
    <property type="entry name" value="GcvT/YgfZ_C"/>
</dbReference>
<dbReference type="InterPro" id="IPR027266">
    <property type="entry name" value="TrmE/GcvT_dom1"/>
</dbReference>
<dbReference type="NCBIfam" id="TIGR00528">
    <property type="entry name" value="gcvT"/>
    <property type="match status" value="1"/>
</dbReference>
<dbReference type="NCBIfam" id="NF001567">
    <property type="entry name" value="PRK00389.1"/>
    <property type="match status" value="1"/>
</dbReference>
<dbReference type="PANTHER" id="PTHR43757">
    <property type="entry name" value="AMINOMETHYLTRANSFERASE"/>
    <property type="match status" value="1"/>
</dbReference>
<dbReference type="PANTHER" id="PTHR43757:SF2">
    <property type="entry name" value="AMINOMETHYLTRANSFERASE, MITOCHONDRIAL"/>
    <property type="match status" value="1"/>
</dbReference>
<dbReference type="Pfam" id="PF01571">
    <property type="entry name" value="GCV_T"/>
    <property type="match status" value="1"/>
</dbReference>
<dbReference type="Pfam" id="PF08669">
    <property type="entry name" value="GCV_T_C"/>
    <property type="match status" value="1"/>
</dbReference>
<dbReference type="PIRSF" id="PIRSF006487">
    <property type="entry name" value="GcvT"/>
    <property type="match status" value="1"/>
</dbReference>
<dbReference type="SUPFAM" id="SSF101790">
    <property type="entry name" value="Aminomethyltransferase beta-barrel domain"/>
    <property type="match status" value="1"/>
</dbReference>
<dbReference type="SUPFAM" id="SSF103025">
    <property type="entry name" value="Folate-binding domain"/>
    <property type="match status" value="1"/>
</dbReference>
<organism>
    <name type="scientific">Shigella boydii serotype 18 (strain CDC 3083-94 / BS512)</name>
    <dbReference type="NCBI Taxonomy" id="344609"/>
    <lineage>
        <taxon>Bacteria</taxon>
        <taxon>Pseudomonadati</taxon>
        <taxon>Pseudomonadota</taxon>
        <taxon>Gammaproteobacteria</taxon>
        <taxon>Enterobacterales</taxon>
        <taxon>Enterobacteriaceae</taxon>
        <taxon>Shigella</taxon>
    </lineage>
</organism>
<evidence type="ECO:0000255" key="1">
    <source>
        <dbReference type="HAMAP-Rule" id="MF_00259"/>
    </source>
</evidence>